<feature type="chain" id="PRO_1000097548" description="Queuine tRNA-ribosyltransferase">
    <location>
        <begin position="1"/>
        <end position="371"/>
    </location>
</feature>
<feature type="region of interest" description="RNA binding" evidence="1">
    <location>
        <begin position="246"/>
        <end position="252"/>
    </location>
</feature>
<feature type="region of interest" description="RNA binding; important for wobble base 34 recognition" evidence="1">
    <location>
        <begin position="270"/>
        <end position="274"/>
    </location>
</feature>
<feature type="active site" description="Proton acceptor" evidence="1">
    <location>
        <position position="90"/>
    </location>
</feature>
<feature type="active site" description="Nucleophile" evidence="1">
    <location>
        <position position="265"/>
    </location>
</feature>
<feature type="binding site" evidence="1">
    <location>
        <begin position="90"/>
        <end position="94"/>
    </location>
    <ligand>
        <name>substrate</name>
    </ligand>
</feature>
<feature type="binding site" evidence="1">
    <location>
        <position position="144"/>
    </location>
    <ligand>
        <name>substrate</name>
    </ligand>
</feature>
<feature type="binding site" evidence="1">
    <location>
        <position position="189"/>
    </location>
    <ligand>
        <name>substrate</name>
    </ligand>
</feature>
<feature type="binding site" evidence="1">
    <location>
        <position position="215"/>
    </location>
    <ligand>
        <name>substrate</name>
    </ligand>
</feature>
<feature type="binding site" evidence="1">
    <location>
        <position position="303"/>
    </location>
    <ligand>
        <name>Zn(2+)</name>
        <dbReference type="ChEBI" id="CHEBI:29105"/>
    </ligand>
</feature>
<feature type="binding site" evidence="1">
    <location>
        <position position="305"/>
    </location>
    <ligand>
        <name>Zn(2+)</name>
        <dbReference type="ChEBI" id="CHEBI:29105"/>
    </ligand>
</feature>
<feature type="binding site" evidence="1">
    <location>
        <position position="308"/>
    </location>
    <ligand>
        <name>Zn(2+)</name>
        <dbReference type="ChEBI" id="CHEBI:29105"/>
    </ligand>
</feature>
<feature type="binding site" evidence="1">
    <location>
        <position position="334"/>
    </location>
    <ligand>
        <name>Zn(2+)</name>
        <dbReference type="ChEBI" id="CHEBI:29105"/>
    </ligand>
</feature>
<evidence type="ECO:0000255" key="1">
    <source>
        <dbReference type="HAMAP-Rule" id="MF_00168"/>
    </source>
</evidence>
<gene>
    <name evidence="1" type="primary">tgt</name>
    <name type="ordered locus">HPSH_01460</name>
</gene>
<protein>
    <recommendedName>
        <fullName evidence="1">Queuine tRNA-ribosyltransferase</fullName>
        <ecNumber evidence="1">2.4.2.29</ecNumber>
    </recommendedName>
    <alternativeName>
        <fullName evidence="1">Guanine insertion enzyme</fullName>
    </alternativeName>
    <alternativeName>
        <fullName evidence="1">tRNA-guanine transglycosylase</fullName>
    </alternativeName>
</protein>
<name>TGT_HELPS</name>
<reference key="1">
    <citation type="submission" date="2008-05" db="EMBL/GenBank/DDBJ databases">
        <title>Genome sequence of Helicobacter pylori from the remote Amazon: traces of Asian ancestry of the first Americans.</title>
        <authorList>
            <person name="Kersulyte D."/>
            <person name="Kalia A."/>
            <person name="Gilman R.H."/>
            <person name="Berg D.E."/>
        </authorList>
    </citation>
    <scope>NUCLEOTIDE SEQUENCE [LARGE SCALE GENOMIC DNA]</scope>
    <source>
        <strain>Shi470</strain>
    </source>
</reference>
<comment type="function">
    <text evidence="1">Catalyzes the base-exchange of a guanine (G) residue with the queuine precursor 7-aminomethyl-7-deazaguanine (PreQ1) at position 34 (anticodon wobble position) in tRNAs with GU(N) anticodons (tRNA-Asp, -Asn, -His and -Tyr). Catalysis occurs through a double-displacement mechanism. The nucleophile active site attacks the C1' of nucleotide 34 to detach the guanine base from the RNA, forming a covalent enzyme-RNA intermediate. The proton acceptor active site deprotonates the incoming PreQ1, allowing a nucleophilic attack on the C1' of the ribose to form the product. After dissociation, two additional enzymatic reactions on the tRNA convert PreQ1 to queuine (Q), resulting in the hypermodified nucleoside queuosine (7-(((4,5-cis-dihydroxy-2-cyclopenten-1-yl)amino)methyl)-7-deazaguanosine).</text>
</comment>
<comment type="catalytic activity">
    <reaction evidence="1">
        <text>7-aminomethyl-7-carbaguanine + guanosine(34) in tRNA = 7-aminomethyl-7-carbaguanosine(34) in tRNA + guanine</text>
        <dbReference type="Rhea" id="RHEA:24104"/>
        <dbReference type="Rhea" id="RHEA-COMP:10341"/>
        <dbReference type="Rhea" id="RHEA-COMP:10342"/>
        <dbReference type="ChEBI" id="CHEBI:16235"/>
        <dbReference type="ChEBI" id="CHEBI:58703"/>
        <dbReference type="ChEBI" id="CHEBI:74269"/>
        <dbReference type="ChEBI" id="CHEBI:82833"/>
        <dbReference type="EC" id="2.4.2.29"/>
    </reaction>
</comment>
<comment type="cofactor">
    <cofactor evidence="1">
        <name>Zn(2+)</name>
        <dbReference type="ChEBI" id="CHEBI:29105"/>
    </cofactor>
    <text evidence="1">Binds 1 zinc ion per subunit.</text>
</comment>
<comment type="pathway">
    <text evidence="1">tRNA modification; tRNA-queuosine biosynthesis.</text>
</comment>
<comment type="subunit">
    <text evidence="1">Homodimer. Within each dimer, one monomer is responsible for RNA recognition and catalysis, while the other monomer binds to the replacement base PreQ1.</text>
</comment>
<comment type="similarity">
    <text evidence="1">Belongs to the queuine tRNA-ribosyltransferase family.</text>
</comment>
<organism>
    <name type="scientific">Helicobacter pylori (strain Shi470)</name>
    <dbReference type="NCBI Taxonomy" id="512562"/>
    <lineage>
        <taxon>Bacteria</taxon>
        <taxon>Pseudomonadati</taxon>
        <taxon>Campylobacterota</taxon>
        <taxon>Epsilonproteobacteria</taxon>
        <taxon>Campylobacterales</taxon>
        <taxon>Helicobacteraceae</taxon>
        <taxon>Helicobacter</taxon>
    </lineage>
</organism>
<sequence>MDFQLQATDNNARAGLLNLAHSQVATPVFMPVGTQGCIKSLDATDMQGILGAKLILANTYHLYLRPGEKVVEELGGLHRFAQFHGSFLTDSGGFQAFSLSDNVKLQEDGIVFKSHIDGSKHLFTPAKVLDIQYSLNSDIMMVLDDLVGLPAPLKRLEESIKRSAKWANLSLEYHKQKNRPNNNLFAIIQGGTHLKMRSLSVGLTHEGFDGYAIGGLAVGESADEMLETIAHTAPLLPKDKPRYLMGVGTPENILDAIGLGVDMFDCVMPTRNARNATLFTHSGKISIKNAPYKLDDTPIEENCACYTCKRYSKAYLHHLFRAKELTYARLASLHNLHFYLELVKNARNAILEKRFLSFKKEFLKKYHSRSH</sequence>
<dbReference type="EC" id="2.4.2.29" evidence="1"/>
<dbReference type="EMBL" id="CP001072">
    <property type="protein sequence ID" value="ACD47744.1"/>
    <property type="molecule type" value="Genomic_DNA"/>
</dbReference>
<dbReference type="RefSeq" id="WP_000347410.1">
    <property type="nucleotide sequence ID" value="NC_010698.2"/>
</dbReference>
<dbReference type="SMR" id="B2USB2"/>
<dbReference type="KEGG" id="hps:HPSH_01460"/>
<dbReference type="HOGENOM" id="CLU_022060_0_1_7"/>
<dbReference type="UniPathway" id="UPA00392"/>
<dbReference type="GO" id="GO:0005829">
    <property type="term" value="C:cytosol"/>
    <property type="evidence" value="ECO:0007669"/>
    <property type="project" value="TreeGrafter"/>
</dbReference>
<dbReference type="GO" id="GO:0046872">
    <property type="term" value="F:metal ion binding"/>
    <property type="evidence" value="ECO:0007669"/>
    <property type="project" value="UniProtKB-KW"/>
</dbReference>
<dbReference type="GO" id="GO:0008479">
    <property type="term" value="F:tRNA-guanosine(34) queuine transglycosylase activity"/>
    <property type="evidence" value="ECO:0007669"/>
    <property type="project" value="UniProtKB-UniRule"/>
</dbReference>
<dbReference type="GO" id="GO:0008616">
    <property type="term" value="P:queuosine biosynthetic process"/>
    <property type="evidence" value="ECO:0007669"/>
    <property type="project" value="UniProtKB-UniRule"/>
</dbReference>
<dbReference type="GO" id="GO:0101030">
    <property type="term" value="P:tRNA-guanine transglycosylation"/>
    <property type="evidence" value="ECO:0007669"/>
    <property type="project" value="InterPro"/>
</dbReference>
<dbReference type="Gene3D" id="3.20.20.105">
    <property type="entry name" value="Queuine tRNA-ribosyltransferase-like"/>
    <property type="match status" value="1"/>
</dbReference>
<dbReference type="HAMAP" id="MF_00168">
    <property type="entry name" value="Q_tRNA_Tgt"/>
    <property type="match status" value="1"/>
</dbReference>
<dbReference type="InterPro" id="IPR004803">
    <property type="entry name" value="TGT"/>
</dbReference>
<dbReference type="InterPro" id="IPR036511">
    <property type="entry name" value="TGT-like_sf"/>
</dbReference>
<dbReference type="InterPro" id="IPR002616">
    <property type="entry name" value="tRNA_ribo_trans-like"/>
</dbReference>
<dbReference type="NCBIfam" id="TIGR00430">
    <property type="entry name" value="Q_tRNA_tgt"/>
    <property type="match status" value="1"/>
</dbReference>
<dbReference type="NCBIfam" id="TIGR00449">
    <property type="entry name" value="tgt_general"/>
    <property type="match status" value="1"/>
</dbReference>
<dbReference type="PANTHER" id="PTHR43530">
    <property type="entry name" value="QUEUINE TRNA-RIBOSYLTRANSFERASE CATALYTIC SUBUNIT 1"/>
    <property type="match status" value="1"/>
</dbReference>
<dbReference type="PANTHER" id="PTHR43530:SF1">
    <property type="entry name" value="QUEUINE TRNA-RIBOSYLTRANSFERASE CATALYTIC SUBUNIT 1"/>
    <property type="match status" value="1"/>
</dbReference>
<dbReference type="Pfam" id="PF01702">
    <property type="entry name" value="TGT"/>
    <property type="match status" value="1"/>
</dbReference>
<dbReference type="SUPFAM" id="SSF51713">
    <property type="entry name" value="tRNA-guanine transglycosylase"/>
    <property type="match status" value="1"/>
</dbReference>
<keyword id="KW-0328">Glycosyltransferase</keyword>
<keyword id="KW-0479">Metal-binding</keyword>
<keyword id="KW-0671">Queuosine biosynthesis</keyword>
<keyword id="KW-0808">Transferase</keyword>
<keyword id="KW-0819">tRNA processing</keyword>
<keyword id="KW-0862">Zinc</keyword>
<proteinExistence type="inferred from homology"/>
<accession>B2USB2</accession>